<feature type="chain" id="PRO_0000460758" description="Bacterioferritin BfrB">
    <location>
        <begin position="1"/>
        <end position="158"/>
    </location>
</feature>
<feature type="domain" description="Ferritin-like diiron" evidence="1">
    <location>
        <begin position="1"/>
        <end position="145"/>
    </location>
</feature>
<feature type="binding site" evidence="4 6 19 31 33">
    <location>
        <position position="18"/>
    </location>
    <ligand>
        <name>Fe(2+)</name>
        <dbReference type="ChEBI" id="CHEBI:29033"/>
        <label>Fe1</label>
    </ligand>
</feature>
<feature type="binding site" evidence="4 6 19 31 33">
    <location>
        <position position="51"/>
    </location>
    <ligand>
        <name>Fe(2+)</name>
        <dbReference type="ChEBI" id="CHEBI:29033"/>
        <label>Fe1</label>
    </ligand>
</feature>
<feature type="binding site" evidence="4 6 19 31 33">
    <location>
        <position position="51"/>
    </location>
    <ligand>
        <name>Fe(2+)</name>
        <dbReference type="ChEBI" id="CHEBI:29033"/>
        <label>Fe2</label>
    </ligand>
</feature>
<feature type="binding site" description="axial binding residue" evidence="4 5 6 19 22 31 33 41">
    <location>
        <position position="52"/>
    </location>
    <ligand>
        <name>heme b</name>
        <dbReference type="ChEBI" id="CHEBI:60344"/>
        <note>ligand shared between dimeric partners</note>
    </ligand>
    <ligandPart>
        <name>Fe</name>
        <dbReference type="ChEBI" id="CHEBI:18248"/>
    </ligandPart>
</feature>
<feature type="binding site" evidence="4 6 19 31 33">
    <location>
        <position position="54"/>
    </location>
    <ligand>
        <name>Fe(2+)</name>
        <dbReference type="ChEBI" id="CHEBI:29033"/>
        <label>Fe1</label>
    </ligand>
</feature>
<feature type="binding site" evidence="4 6 19 31 33">
    <location>
        <position position="94"/>
    </location>
    <ligand>
        <name>Fe(2+)</name>
        <dbReference type="ChEBI" id="CHEBI:29033"/>
        <label>Fe2</label>
    </ligand>
</feature>
<feature type="binding site" evidence="4 6 19 31 33">
    <location>
        <position position="127"/>
    </location>
    <ligand>
        <name>Fe(2+)</name>
        <dbReference type="ChEBI" id="CHEBI:29033"/>
        <label>Fe1</label>
    </ligand>
</feature>
<feature type="binding site" evidence="4 6 19 31 33">
    <location>
        <position position="127"/>
    </location>
    <ligand>
        <name>Fe(2+)</name>
        <dbReference type="ChEBI" id="CHEBI:29033"/>
        <label>Fe2</label>
    </ligand>
</feature>
<feature type="binding site" evidence="4 6 19 31 33">
    <location>
        <position position="130"/>
    </location>
    <ligand>
        <name>Fe(2+)</name>
        <dbReference type="ChEBI" id="CHEBI:29033"/>
        <label>Fe2</label>
    </ligand>
</feature>
<feature type="binding site" evidence="4 5 6 18 22 31 33 41">
    <location>
        <position position="148"/>
    </location>
    <ligand>
        <name>K(+)</name>
        <dbReference type="ChEBI" id="CHEBI:29103"/>
    </ligand>
</feature>
<feature type="binding site" evidence="4 5 6 18 22 31 33 41">
    <location>
        <position position="151"/>
    </location>
    <ligand>
        <name>K(+)</name>
        <dbReference type="ChEBI" id="CHEBI:29103"/>
    </ligand>
</feature>
<feature type="mutagenesis site" description="About 30% active in Fe(2+) oxidation and storage, diiron-binding site does not coordinate fully, decreased overall flexibility of the BFR, partially occludes B-pores, see Fe ion inside the B-pore." evidence="6">
    <original>D</original>
    <variation>F</variation>
    <location>
        <position position="34"/>
    </location>
</feature>
<feature type="mutagenesis site" description="Assembles into normal BFR with wild-type ability to oxidize Fe(2+) and store Fe(3+), no iron release from BRF, does not bind Bfd. Iron is not mobilizable, increased secretion of pyoverdin siderophore." evidence="7 8">
    <original>LPNLQDLGKLLIGE</original>
    <variation>APNLQDLGKLLIGA</variation>
    <location>
        <begin position="68"/>
        <end position="81"/>
    </location>
</feature>
<feature type="mutagenesis site" description="Assembles into normal BFR with wild-type ability to oxidize Fe(2+) and store Fe(3+), 5.2-fold decrease in rate of iron release from BRF, greatly reduced affinity for Bfd." evidence="7">
    <original>L</original>
    <variation>A</variation>
    <location>
        <position position="68"/>
    </location>
</feature>
<feature type="mutagenesis site" description="Assembles into normal BFR with wild-type ability to oxidize Fe(2+) and store Fe(3+), 3.2-fold decrease in rate of iron release from BRF, greatly reduced affinity for Bfd." evidence="7">
    <original>E</original>
    <variation>A</variation>
    <location>
        <position position="81"/>
    </location>
</feature>
<feature type="mutagenesis site" description="Assembles into normal BFR with wild-type ability to oxidize Fe(2+) and store Fe(3+), 5.5-fold decrease in rate of iron release from BRF, greatly reduced affinity for Bfd." evidence="7">
    <original>E</original>
    <variation>A</variation>
    <location>
        <position position="85"/>
    </location>
</feature>
<feature type="mutagenesis site" description="Wild-type function in Fe(2+) oxidation and storage, His-130 in various conformations in BFR, reveals more Fe cations bound inside the BFR cavity, see Fe ion inside the B-pore." evidence="6">
    <original>CDLNLELK</original>
    <variation>SDLNLELC</variation>
    <location>
        <begin position="89"/>
        <end position="96"/>
    </location>
</feature>
<feature type="mutagenesis site" description="About 70% active in Fe(2+) oxidation and storage, diiron-binding site does not coordinate fully, decreased overall flexibility of the BFR, loss of 1 ligand to K(+), reveals more Fe cations bound inside the BFR cavity." evidence="6">
    <original>N</original>
    <variation>L</variation>
    <location>
        <position position="148"/>
    </location>
</feature>
<feature type="mutagenesis site" description="About 70% active in Fe(2+) oxidation and storage, diiron-binding site does not coordinate fully, loss of bound K(+)." evidence="6">
    <original>Q</original>
    <variation>L</variation>
    <location>
        <position position="151"/>
    </location>
</feature>
<feature type="sequence conflict" description="In Ref. 2; AA sequence." evidence="16" ref="2">
    <original>G</original>
    <variation>Y</variation>
    <location>
        <position position="41"/>
    </location>
</feature>
<feature type="sequence conflict" description="In Ref. 2; AA sequence." evidence="16" ref="2">
    <original>E</original>
    <variation>L</variation>
    <location>
        <position position="44"/>
    </location>
</feature>
<feature type="helix" evidence="45">
    <location>
        <begin position="5"/>
        <end position="34"/>
    </location>
</feature>
<feature type="helix" evidence="45">
    <location>
        <begin position="38"/>
        <end position="64"/>
    </location>
</feature>
<feature type="helix" evidence="45">
    <location>
        <begin position="83"/>
        <end position="110"/>
    </location>
</feature>
<feature type="helix" evidence="45">
    <location>
        <begin position="114"/>
        <end position="144"/>
    </location>
</feature>
<feature type="helix" evidence="45">
    <location>
        <begin position="146"/>
        <end position="151"/>
    </location>
</feature>
<keyword id="KW-0002">3D-structure</keyword>
<keyword id="KW-0963">Cytoplasm</keyword>
<keyword id="KW-0903">Direct protein sequencing</keyword>
<keyword id="KW-0349">Heme</keyword>
<keyword id="KW-0406">Ion transport</keyword>
<keyword id="KW-0408">Iron</keyword>
<keyword id="KW-0409">Iron storage</keyword>
<keyword id="KW-0410">Iron transport</keyword>
<keyword id="KW-0479">Metal-binding</keyword>
<keyword id="KW-0560">Oxidoreductase</keyword>
<keyword id="KW-0630">Potassium</keyword>
<keyword id="KW-1185">Reference proteome</keyword>
<keyword id="KW-0813">Transport</keyword>
<sequence length="158" mass="18553">MKGDKKVIQHLNKILGNELIAINQYFLHSRMWNDWGLKRLGAHEYHESIDEMKHADKLIERILFLEGLPNLQDLGKLLIGENTQEMLQCDLNLELKATKDLREAIVHCEQVHDYVSRDLLKDILESEEEHIDYLETQLGLIQKVGLENYLQSHMHEDD</sequence>
<gene>
    <name evidence="13 17" type="primary">bfrB</name>
    <name evidence="17" type="ordered locus">PA3531</name>
</gene>
<evidence type="ECO:0000255" key="1">
    <source>
        <dbReference type="PROSITE-ProRule" id="PRU00085"/>
    </source>
</evidence>
<evidence type="ECO:0000269" key="2">
    <source>
    </source>
</evidence>
<evidence type="ECO:0000269" key="3">
    <source>
    </source>
</evidence>
<evidence type="ECO:0000269" key="4">
    <source>
    </source>
</evidence>
<evidence type="ECO:0000269" key="5">
    <source>
    </source>
</evidence>
<evidence type="ECO:0000269" key="6">
    <source>
    </source>
</evidence>
<evidence type="ECO:0000269" key="7">
    <source>
    </source>
</evidence>
<evidence type="ECO:0000269" key="8">
    <source>
    </source>
</evidence>
<evidence type="ECO:0000269" key="9">
    <source>
    </source>
</evidence>
<evidence type="ECO:0000269" key="10">
    <source>
    </source>
</evidence>
<evidence type="ECO:0000269" key="11">
    <source>
    </source>
</evidence>
<evidence type="ECO:0000269" key="12">
    <source>
    </source>
</evidence>
<evidence type="ECO:0000303" key="13">
    <source>
    </source>
</evidence>
<evidence type="ECO:0000303" key="14">
    <source>
    </source>
</evidence>
<evidence type="ECO:0000303" key="15">
    <source>
    </source>
</evidence>
<evidence type="ECO:0000305" key="16"/>
<evidence type="ECO:0000312" key="17">
    <source>
        <dbReference type="EMBL" id="AAG06919.1"/>
    </source>
</evidence>
<evidence type="ECO:0007744" key="18">
    <source>
        <dbReference type="PDB" id="3IS7"/>
    </source>
</evidence>
<evidence type="ECO:0007744" key="19">
    <source>
        <dbReference type="PDB" id="3IS8"/>
    </source>
</evidence>
<evidence type="ECO:0007744" key="20">
    <source>
        <dbReference type="PDB" id="3ISE"/>
    </source>
</evidence>
<evidence type="ECO:0007744" key="21">
    <source>
        <dbReference type="PDB" id="3ISF"/>
    </source>
</evidence>
<evidence type="ECO:0007744" key="22">
    <source>
        <dbReference type="PDB" id="4E6K"/>
    </source>
</evidence>
<evidence type="ECO:0007744" key="23">
    <source>
        <dbReference type="PDB" id="4TO9"/>
    </source>
</evidence>
<evidence type="ECO:0007744" key="24">
    <source>
        <dbReference type="PDB" id="4TOA"/>
    </source>
</evidence>
<evidence type="ECO:0007744" key="25">
    <source>
        <dbReference type="PDB" id="4TOB"/>
    </source>
</evidence>
<evidence type="ECO:0007744" key="26">
    <source>
        <dbReference type="PDB" id="4TOC"/>
    </source>
</evidence>
<evidence type="ECO:0007744" key="27">
    <source>
        <dbReference type="PDB" id="4TOD"/>
    </source>
</evidence>
<evidence type="ECO:0007744" key="28">
    <source>
        <dbReference type="PDB" id="4TOE"/>
    </source>
</evidence>
<evidence type="ECO:0007744" key="29">
    <source>
        <dbReference type="PDB" id="4TOF"/>
    </source>
</evidence>
<evidence type="ECO:0007744" key="30">
    <source>
        <dbReference type="PDB" id="4TOG"/>
    </source>
</evidence>
<evidence type="ECO:0007744" key="31">
    <source>
        <dbReference type="PDB" id="4TOH"/>
    </source>
</evidence>
<evidence type="ECO:0007744" key="32">
    <source>
        <dbReference type="PDB" id="5D8O"/>
    </source>
</evidence>
<evidence type="ECO:0007744" key="33">
    <source>
        <dbReference type="PDB" id="5D8P"/>
    </source>
</evidence>
<evidence type="ECO:0007744" key="34">
    <source>
        <dbReference type="PDB" id="5D8Q"/>
    </source>
</evidence>
<evidence type="ECO:0007744" key="35">
    <source>
        <dbReference type="PDB" id="5D8R"/>
    </source>
</evidence>
<evidence type="ECO:0007744" key="36">
    <source>
        <dbReference type="PDB" id="5D8S"/>
    </source>
</evidence>
<evidence type="ECO:0007744" key="37">
    <source>
        <dbReference type="PDB" id="5D8X"/>
    </source>
</evidence>
<evidence type="ECO:0007744" key="38">
    <source>
        <dbReference type="PDB" id="5D8Y"/>
    </source>
</evidence>
<evidence type="ECO:0007744" key="39">
    <source>
        <dbReference type="PDB" id="6NLF"/>
    </source>
</evidence>
<evidence type="ECO:0007744" key="40">
    <source>
        <dbReference type="PDB" id="6NLG"/>
    </source>
</evidence>
<evidence type="ECO:0007744" key="41">
    <source>
        <dbReference type="PDB" id="7K5E"/>
    </source>
</evidence>
<evidence type="ECO:0007744" key="42">
    <source>
        <dbReference type="PDB" id="7K5F"/>
    </source>
</evidence>
<evidence type="ECO:0007744" key="43">
    <source>
        <dbReference type="PDB" id="7K5G"/>
    </source>
</evidence>
<evidence type="ECO:0007744" key="44">
    <source>
        <dbReference type="PDB" id="7K5H"/>
    </source>
</evidence>
<evidence type="ECO:0007829" key="45">
    <source>
        <dbReference type="PDB" id="6NLF"/>
    </source>
</evidence>
<dbReference type="EC" id="1.16.3.1" evidence="3 4 8"/>
<dbReference type="EMBL" id="AE004091">
    <property type="protein sequence ID" value="AAG06919.1"/>
    <property type="molecule type" value="Genomic_DNA"/>
</dbReference>
<dbReference type="PIR" id="A83205">
    <property type="entry name" value="A83205"/>
</dbReference>
<dbReference type="RefSeq" id="NP_252221.1">
    <property type="nucleotide sequence ID" value="NC_002516.2"/>
</dbReference>
<dbReference type="RefSeq" id="WP_003092078.1">
    <property type="nucleotide sequence ID" value="NZ_QZGE01000001.1"/>
</dbReference>
<dbReference type="PDB" id="3IS7">
    <property type="method" value="X-ray"/>
    <property type="resolution" value="2.10 A"/>
    <property type="chains" value="A/B/C/D/E/F/G/H/I/J/K/L/M/N/O/P/Q/R/S/T/U/V/W/X=1-158"/>
</dbReference>
<dbReference type="PDB" id="3IS8">
    <property type="method" value="X-ray"/>
    <property type="resolution" value="2.25 A"/>
    <property type="chains" value="A/B/C/D/E/F/G/H/I/J/K/L/M/N/O/P/Q/R/S/T/U/V/W/X=1-158"/>
</dbReference>
<dbReference type="PDB" id="3ISE">
    <property type="method" value="X-ray"/>
    <property type="resolution" value="2.80 A"/>
    <property type="chains" value="A/B/C/D/E/F/G/H/I/J/K/L/M/N/O/P/Q/R/S/T/U/V/W/X=1-158"/>
</dbReference>
<dbReference type="PDB" id="3ISF">
    <property type="method" value="X-ray"/>
    <property type="resolution" value="2.07 A"/>
    <property type="chains" value="A/B/C/D/E/F=1-158"/>
</dbReference>
<dbReference type="PDB" id="4E6K">
    <property type="method" value="X-ray"/>
    <property type="resolution" value="2.00 A"/>
    <property type="chains" value="A/B/C/D/E/F=1-158"/>
</dbReference>
<dbReference type="PDB" id="4TO9">
    <property type="method" value="X-ray"/>
    <property type="resolution" value="2.00 A"/>
    <property type="chains" value="A/B/C/D/E/F/G/H/I/J/K/L/M/N/O/P/Q/R/S/T/U/V/W/X=1-158"/>
</dbReference>
<dbReference type="PDB" id="4TOA">
    <property type="method" value="X-ray"/>
    <property type="resolution" value="1.95 A"/>
    <property type="chains" value="A/B/C/D/E/F/G/H/I/J/K/L/M/N/O/P/Q/R/S/T/U/V/W/X=1-158"/>
</dbReference>
<dbReference type="PDB" id="4TOB">
    <property type="method" value="X-ray"/>
    <property type="resolution" value="1.95 A"/>
    <property type="chains" value="A/B/C/D/E/F/G/H/I/J/K/L/M/N/O/P/Q/R/S/T/U/V/W/X=1-158"/>
</dbReference>
<dbReference type="PDB" id="4TOC">
    <property type="method" value="X-ray"/>
    <property type="resolution" value="2.25 A"/>
    <property type="chains" value="A/B/C/D/E/F/G/H/I/J/K/L/M/N/O/P/Q/R/S/T/U/V/W/X=1-158"/>
</dbReference>
<dbReference type="PDB" id="4TOD">
    <property type="method" value="X-ray"/>
    <property type="resolution" value="2.05 A"/>
    <property type="chains" value="A/B/C/D/E/F/G/H/I/J/K/L/M/N/O/P/Q/R/S/T/U/V/W/X=1-158"/>
</dbReference>
<dbReference type="PDB" id="4TOE">
    <property type="method" value="X-ray"/>
    <property type="resolution" value="2.20 A"/>
    <property type="chains" value="A/B/C/D/E/F/G/H/I/J/K/L/M/N/O/P/Q/R/S/T/U/V/W/X=1-158"/>
</dbReference>
<dbReference type="PDB" id="4TOF">
    <property type="method" value="X-ray"/>
    <property type="resolution" value="1.65 A"/>
    <property type="chains" value="A/B/C/D=1-158"/>
</dbReference>
<dbReference type="PDB" id="4TOG">
    <property type="method" value="X-ray"/>
    <property type="resolution" value="1.80 A"/>
    <property type="chains" value="A/B/C/D=1-158"/>
</dbReference>
<dbReference type="PDB" id="4TOH">
    <property type="method" value="X-ray"/>
    <property type="resolution" value="1.80 A"/>
    <property type="chains" value="A/B/C/D=1-158"/>
</dbReference>
<dbReference type="PDB" id="5D8O">
    <property type="method" value="X-ray"/>
    <property type="resolution" value="1.90 A"/>
    <property type="chains" value="A/B/C/D/E/F/G/H/I/J/K/L=1-158"/>
</dbReference>
<dbReference type="PDB" id="5D8P">
    <property type="method" value="X-ray"/>
    <property type="resolution" value="2.35 A"/>
    <property type="chains" value="A/B/C/D/E/F/G/H/I/J/K/L=1-158"/>
</dbReference>
<dbReference type="PDB" id="5D8Q">
    <property type="method" value="X-ray"/>
    <property type="resolution" value="2.20 A"/>
    <property type="chains" value="A/B/C/D/E/F/G/H/I/J/K/L=1-158"/>
</dbReference>
<dbReference type="PDB" id="5D8R">
    <property type="method" value="X-ray"/>
    <property type="resolution" value="2.50 A"/>
    <property type="chains" value="A/B/C/D/E/F/G/H/I/J/K/L=1-158"/>
</dbReference>
<dbReference type="PDB" id="5D8S">
    <property type="method" value="X-ray"/>
    <property type="resolution" value="2.55 A"/>
    <property type="chains" value="A/B/C/D/E/F/G/H/I/J/K/L=1-158"/>
</dbReference>
<dbReference type="PDB" id="5D8X">
    <property type="method" value="X-ray"/>
    <property type="resolution" value="1.50 A"/>
    <property type="chains" value="A/B/C/D/E/F/G/H/I/J/K/L/M/N/O/P/Q/R/S/T/U/V/W/X=1-158"/>
</dbReference>
<dbReference type="PDB" id="5D8Y">
    <property type="method" value="X-ray"/>
    <property type="resolution" value="2.05 A"/>
    <property type="chains" value="A/B/C/D/E/F/G/H/I/J/K/L/M/N/O/P/Q/R/S/T/U/V/W/X=1-158"/>
</dbReference>
<dbReference type="PDB" id="6NLF">
    <property type="method" value="X-ray"/>
    <property type="resolution" value="1.45 A"/>
    <property type="chains" value="A/B/C/D/E/F/G/H/I/J/K/L=1-158"/>
</dbReference>
<dbReference type="PDB" id="6NLG">
    <property type="method" value="X-ray"/>
    <property type="resolution" value="1.50 A"/>
    <property type="chains" value="A/B/C/D=1-158"/>
</dbReference>
<dbReference type="PDB" id="6NLI">
    <property type="method" value="X-ray"/>
    <property type="resolution" value="1.90 A"/>
    <property type="chains" value="A/B/C/D/E/F/G/H/I/J/K/L=1-158"/>
</dbReference>
<dbReference type="PDB" id="6NLJ">
    <property type="method" value="X-ray"/>
    <property type="resolution" value="1.65 A"/>
    <property type="chains" value="A/B/C/D/E/F/G/H/I/J/K/L=1-158"/>
</dbReference>
<dbReference type="PDB" id="6NLK">
    <property type="method" value="X-ray"/>
    <property type="resolution" value="1.85 A"/>
    <property type="chains" value="A/B/C/D/E/F/G/H/I/J/K/L=1-158"/>
</dbReference>
<dbReference type="PDB" id="6NLL">
    <property type="method" value="X-ray"/>
    <property type="resolution" value="1.80 A"/>
    <property type="chains" value="A/B/C/D/E/F/G/H/I/J/K/L=1-158"/>
</dbReference>
<dbReference type="PDB" id="6NLM">
    <property type="method" value="X-ray"/>
    <property type="resolution" value="1.90 A"/>
    <property type="chains" value="A/B/C/D/E/F/G/H/I/J/K/L=1-158"/>
</dbReference>
<dbReference type="PDB" id="6NLN">
    <property type="method" value="X-ray"/>
    <property type="resolution" value="1.60 A"/>
    <property type="chains" value="A/B/C/D/E/F/G/H/I/J/K/L=1-158"/>
</dbReference>
<dbReference type="PDB" id="7K5E">
    <property type="method" value="X-ray"/>
    <property type="resolution" value="1.75 A"/>
    <property type="chains" value="A/B/C/D/E/F/G/H/I/J/K/L=1-158"/>
</dbReference>
<dbReference type="PDB" id="7K5F">
    <property type="method" value="X-ray"/>
    <property type="resolution" value="1.95 A"/>
    <property type="chains" value="A/B/C/D/E/F/G/H/I/J/K/L=1-158"/>
</dbReference>
<dbReference type="PDB" id="7K5G">
    <property type="method" value="X-ray"/>
    <property type="resolution" value="1.95 A"/>
    <property type="chains" value="A/B/C/D/E/F/G/H/I/J/K/L=1-158"/>
</dbReference>
<dbReference type="PDB" id="7K5H">
    <property type="method" value="X-ray"/>
    <property type="resolution" value="1.90 A"/>
    <property type="chains" value="A/B/C/D/E/F/G/H/I/J/K/L=1-158"/>
</dbReference>
<dbReference type="PDBsum" id="3IS7"/>
<dbReference type="PDBsum" id="3IS8"/>
<dbReference type="PDBsum" id="3ISE"/>
<dbReference type="PDBsum" id="3ISF"/>
<dbReference type="PDBsum" id="4E6K"/>
<dbReference type="PDBsum" id="4TO9"/>
<dbReference type="PDBsum" id="4TOA"/>
<dbReference type="PDBsum" id="4TOB"/>
<dbReference type="PDBsum" id="4TOC"/>
<dbReference type="PDBsum" id="4TOD"/>
<dbReference type="PDBsum" id="4TOE"/>
<dbReference type="PDBsum" id="4TOF"/>
<dbReference type="PDBsum" id="4TOG"/>
<dbReference type="PDBsum" id="4TOH"/>
<dbReference type="PDBsum" id="5D8O"/>
<dbReference type="PDBsum" id="5D8P"/>
<dbReference type="PDBsum" id="5D8Q"/>
<dbReference type="PDBsum" id="5D8R"/>
<dbReference type="PDBsum" id="5D8S"/>
<dbReference type="PDBsum" id="5D8X"/>
<dbReference type="PDBsum" id="5D8Y"/>
<dbReference type="PDBsum" id="6NLF"/>
<dbReference type="PDBsum" id="6NLG"/>
<dbReference type="PDBsum" id="6NLI"/>
<dbReference type="PDBsum" id="6NLJ"/>
<dbReference type="PDBsum" id="6NLK"/>
<dbReference type="PDBsum" id="6NLL"/>
<dbReference type="PDBsum" id="6NLM"/>
<dbReference type="PDBsum" id="6NLN"/>
<dbReference type="PDBsum" id="7K5E"/>
<dbReference type="PDBsum" id="7K5F"/>
<dbReference type="PDBsum" id="7K5G"/>
<dbReference type="PDBsum" id="7K5H"/>
<dbReference type="SMR" id="Q9HY79"/>
<dbReference type="FunCoup" id="Q9HY79">
    <property type="interactions" value="288"/>
</dbReference>
<dbReference type="STRING" id="208964.PA3531"/>
<dbReference type="PaxDb" id="208964-PA3531"/>
<dbReference type="DNASU" id="879026"/>
<dbReference type="GeneID" id="77219982"/>
<dbReference type="GeneID" id="879026"/>
<dbReference type="KEGG" id="pae:PA3531"/>
<dbReference type="PATRIC" id="fig|208964.12.peg.3695"/>
<dbReference type="PseudoCAP" id="PA3531"/>
<dbReference type="HOGENOM" id="CLU_104506_2_0_6"/>
<dbReference type="InParanoid" id="Q9HY79"/>
<dbReference type="OrthoDB" id="9800505at2"/>
<dbReference type="PhylomeDB" id="Q9HY79"/>
<dbReference type="BioCyc" id="PAER208964:G1FZ6-3599-MONOMER"/>
<dbReference type="EvolutionaryTrace" id="Q9HY79"/>
<dbReference type="Proteomes" id="UP000002438">
    <property type="component" value="Chromosome"/>
</dbReference>
<dbReference type="GO" id="GO:0005829">
    <property type="term" value="C:cytosol"/>
    <property type="evidence" value="ECO:0000318"/>
    <property type="project" value="GO_Central"/>
</dbReference>
<dbReference type="GO" id="GO:0070288">
    <property type="term" value="C:ferritin complex"/>
    <property type="evidence" value="ECO:0000314"/>
    <property type="project" value="UniProtKB"/>
</dbReference>
<dbReference type="GO" id="GO:0008199">
    <property type="term" value="F:ferric iron binding"/>
    <property type="evidence" value="ECO:0007669"/>
    <property type="project" value="InterPro"/>
</dbReference>
<dbReference type="GO" id="GO:0004322">
    <property type="term" value="F:ferroxidase activity"/>
    <property type="evidence" value="ECO:0000314"/>
    <property type="project" value="UniProtKB"/>
</dbReference>
<dbReference type="GO" id="GO:0020037">
    <property type="term" value="F:heme binding"/>
    <property type="evidence" value="ECO:0000314"/>
    <property type="project" value="UniProtKB"/>
</dbReference>
<dbReference type="GO" id="GO:0005506">
    <property type="term" value="F:iron ion binding"/>
    <property type="evidence" value="ECO:0000314"/>
    <property type="project" value="UniProtKB"/>
</dbReference>
<dbReference type="GO" id="GO:0140315">
    <property type="term" value="F:iron ion sequestering activity"/>
    <property type="evidence" value="ECO:0000314"/>
    <property type="project" value="UniProtKB"/>
</dbReference>
<dbReference type="GO" id="GO:0006879">
    <property type="term" value="P:intracellular iron ion homeostasis"/>
    <property type="evidence" value="ECO:0007669"/>
    <property type="project" value="UniProtKB-KW"/>
</dbReference>
<dbReference type="GO" id="GO:0006826">
    <property type="term" value="P:iron ion transport"/>
    <property type="evidence" value="ECO:0000314"/>
    <property type="project" value="UniProtKB"/>
</dbReference>
<dbReference type="CDD" id="cd00907">
    <property type="entry name" value="Bacterioferritin"/>
    <property type="match status" value="1"/>
</dbReference>
<dbReference type="FunFam" id="1.20.1260.10:FF:000005">
    <property type="entry name" value="Bacterioferritin"/>
    <property type="match status" value="1"/>
</dbReference>
<dbReference type="Gene3D" id="1.20.1260.10">
    <property type="match status" value="1"/>
</dbReference>
<dbReference type="InterPro" id="IPR002024">
    <property type="entry name" value="Bacterioferritin"/>
</dbReference>
<dbReference type="InterPro" id="IPR012347">
    <property type="entry name" value="Ferritin-like"/>
</dbReference>
<dbReference type="InterPro" id="IPR009040">
    <property type="entry name" value="Ferritin-like_diiron"/>
</dbReference>
<dbReference type="InterPro" id="IPR009078">
    <property type="entry name" value="Ferritin-like_SF"/>
</dbReference>
<dbReference type="InterPro" id="IPR008331">
    <property type="entry name" value="Ferritin_DPS_dom"/>
</dbReference>
<dbReference type="NCBIfam" id="TIGR00754">
    <property type="entry name" value="bfr"/>
    <property type="match status" value="1"/>
</dbReference>
<dbReference type="PANTHER" id="PTHR30295">
    <property type="entry name" value="BACTERIOFERRITIN"/>
    <property type="match status" value="1"/>
</dbReference>
<dbReference type="PANTHER" id="PTHR30295:SF0">
    <property type="entry name" value="BACTERIOFERRITIN"/>
    <property type="match status" value="1"/>
</dbReference>
<dbReference type="Pfam" id="PF00210">
    <property type="entry name" value="Ferritin"/>
    <property type="match status" value="1"/>
</dbReference>
<dbReference type="PIRSF" id="PIRSF002560">
    <property type="entry name" value="Bacterioferritin"/>
    <property type="match status" value="1"/>
</dbReference>
<dbReference type="PRINTS" id="PR00601">
    <property type="entry name" value="BACFERRITIN"/>
</dbReference>
<dbReference type="SUPFAM" id="SSF47240">
    <property type="entry name" value="Ferritin-like"/>
    <property type="match status" value="1"/>
</dbReference>
<dbReference type="PROSITE" id="PS00549">
    <property type="entry name" value="BACTERIOFERRITIN"/>
    <property type="match status" value="1"/>
</dbReference>
<dbReference type="PROSITE" id="PS50905">
    <property type="entry name" value="FERRITIN_LIKE"/>
    <property type="match status" value="1"/>
</dbReference>
<proteinExistence type="evidence at protein level"/>
<name>BFRB_PSEAE</name>
<reference evidence="17" key="1">
    <citation type="journal article" date="2000" name="Nature">
        <title>Complete genome sequence of Pseudomonas aeruginosa PAO1, an opportunistic pathogen.</title>
        <authorList>
            <person name="Stover C.K."/>
            <person name="Pham X.-Q.T."/>
            <person name="Erwin A.L."/>
            <person name="Mizoguchi S.D."/>
            <person name="Warrener P."/>
            <person name="Hickey M.J."/>
            <person name="Brinkman F.S.L."/>
            <person name="Hufnagle W.O."/>
            <person name="Kowalik D.J."/>
            <person name="Lagrou M."/>
            <person name="Garber R.L."/>
            <person name="Goltry L."/>
            <person name="Tolentino E."/>
            <person name="Westbrock-Wadman S."/>
            <person name="Yuan Y."/>
            <person name="Brody L.L."/>
            <person name="Coulter S.N."/>
            <person name="Folger K.R."/>
            <person name="Kas A."/>
            <person name="Larbig K."/>
            <person name="Lim R.M."/>
            <person name="Smith K.A."/>
            <person name="Spencer D.H."/>
            <person name="Wong G.K.-S."/>
            <person name="Wu Z."/>
            <person name="Paulsen I.T."/>
            <person name="Reizer J."/>
            <person name="Saier M.H. Jr."/>
            <person name="Hancock R.E.W."/>
            <person name="Lory S."/>
            <person name="Olson M.V."/>
        </authorList>
    </citation>
    <scope>NUCLEOTIDE SEQUENCE [LARGE SCALE GENOMIC DNA]</scope>
    <source>
        <strain>ATCC 15692 / DSM 22644 / CIP 104116 / JCM 14847 / LMG 12228 / 1C / PRS 101 / PAO1</strain>
    </source>
</reference>
<reference key="2">
    <citation type="journal article" date="1994" name="Biochem. J.">
        <title>Structural heterogeneity of Pseudomonas aeruginosa bacterioferritin.</title>
        <authorList>
            <person name="Moore G.R."/>
            <person name="Kadir F.H."/>
            <person name="al-Massad F.K."/>
            <person name="Le Brun N.E."/>
            <person name="Thomson A.J."/>
            <person name="Greenwood C."/>
            <person name="Keen J.N."/>
            <person name="Findlay J.B."/>
        </authorList>
    </citation>
    <scope>PROTEIN SEQUENCE OF 1-55</scope>
    <scope>SUBUNIT</scope>
    <scope>SUBCELLULAR LOCATION</scope>
    <source>
        <strain>ATCC 19429 / DSM 3227 / NBRC 3755 / NCIMB 6750 / NCTC 6750</strain>
    </source>
</reference>
<reference key="3">
    <citation type="journal article" date="1986" name="J. Inorg. Biochem.">
        <title>Isolation and properties of the complex nonheme-iron-containing cytochrome b557 (bacterioferritin) from Pseudomonas aeruginosa.</title>
        <authorList>
            <person name="Moore G.R."/>
            <person name="Mann S."/>
            <person name="Bannister J.V."/>
        </authorList>
    </citation>
    <scope>SUBUNIT</scope>
</reference>
<reference key="4">
    <citation type="journal article" date="2003" name="Arch. Microbiol.">
        <title>Transcriptome analysis of the Pseudomonas aeruginosa response to iron.</title>
        <authorList>
            <person name="Palma M."/>
            <person name="Worgall S."/>
            <person name="Quadri L.E."/>
        </authorList>
    </citation>
    <scope>INDUCTION BY IRON TREATMENT</scope>
    <source>
        <strain>ATCC 15692 / DSM 22644 / CIP 104116 / JCM 14847 / LMG 12228 / 1C / PRS 101 / PAO1</strain>
    </source>
</reference>
<reference key="5">
    <citation type="journal article" date="2009" name="Biochemistry">
        <title>Binding of Pseudomonas aeruginosa apobacterioferritin-associated ferredoxin to bacterioferritin B promotes heme mediation of electron delivery and mobilization of core mineral iron.</title>
        <authorList>
            <person name="Weeratunga S.K."/>
            <person name="Gee C.E."/>
            <person name="Lovell S."/>
            <person name="Zeng Y."/>
            <person name="Woodin C.L."/>
            <person name="Rivera M."/>
        </authorList>
    </citation>
    <scope>FUNCTION</scope>
    <scope>CATALYTIC ACTIVITY</scope>
    <scope>HEME COFACTOR</scope>
    <scope>SUBUNIT</scope>
    <scope>INTERACTION WITH BFD</scope>
</reference>
<reference key="6">
    <citation type="journal article" date="2017" name="Metallomics">
        <title>Inhibiting the BfrB:Bfd interaction in Pseudomonas aeruginosa causes irreversible iron accumulation in bacterioferritin and iron deficiency in the bacterial cytosol.</title>
        <authorList>
            <person name="Eshelman K."/>
            <person name="Yao H."/>
            <person name="Punchi Hewage A.N.D."/>
            <person name="Deay J.J."/>
            <person name="Chandler J.R."/>
            <person name="Rivera M."/>
        </authorList>
    </citation>
    <scope>FUNCTION</scope>
    <scope>CATALYTIC ACTIVITY</scope>
    <scope>DISRUPTION PHENOTYPE</scope>
    <scope>MUTAGENESIS OF LEU-68 AND GLU-81</scope>
    <source>
        <strain>ATCC 15692 / DSM 22644 / CIP 104116 / JCM 14847 / LMG 12228 / 1C / PRS 101 / PAO1</strain>
    </source>
</reference>
<reference key="7">
    <citation type="journal article" date="2022" name="Biomolecules">
        <title>Pseudomonas aeruginosa Bacterioferritin Is Assembled from FtnA and BfrB Subunits with the Relative Proportions Dependent on the Environmental Oxygen Availability.</title>
        <authorList>
            <person name="Yao H."/>
            <person name="Soldano A."/>
            <person name="Fontenot L."/>
            <person name="Donnarumma F."/>
            <person name="Lovell S."/>
            <person name="Chandler J.R."/>
            <person name="Rivera M."/>
        </authorList>
    </citation>
    <scope>HEME COFACTOR</scope>
    <scope>SUBUNIT</scope>
    <scope>MASS SPECTROMETRY</scope>
    <scope>SUBCELLULAR LOCATION</scope>
    <scope>DISRUPTION PHENOTYPE</scope>
    <source>
        <strain>ATCC 15692 / DSM 22644 / CIP 104116 / JCM 14847 / LMG 12228 / 1C / PRS 101 / PAO1</strain>
    </source>
</reference>
<reference evidence="18 19 20 21" key="8">
    <citation type="journal article" date="2010" name="Biochemistry">
        <title>Structural studies of bacterioferritin B from Pseudomonas aeruginosa suggest a gating mechanism for iron uptake via the ferroxidase center.</title>
        <authorList>
            <person name="Weeratunga S.K."/>
            <person name="Lovell S."/>
            <person name="Yao H."/>
            <person name="Battaile K.P."/>
            <person name="Fischer C.J."/>
            <person name="Gee C.E."/>
            <person name="Rivera M."/>
        </authorList>
    </citation>
    <scope>X-RAY CRYSTALLOGRAPHY (2.07 ANGSTROMS) IN COMPLEX WITH K(+); HEME B WITH AND WITHOUT IRON</scope>
    <scope>FUNCTION</scope>
    <scope>CATALYTIC ACTIVITY</scope>
    <scope>HEME COFACTOR</scope>
    <scope>IRON COFACTOR</scope>
    <scope>SUBUNIT</scope>
</reference>
<reference evidence="22" key="9">
    <citation type="journal article" date="2012" name="J. Am. Chem. Soc.">
        <title>The structure of the BfrB-Bfd complex reveals protein-protein interactions enabling iron release from bacterioferritin.</title>
        <authorList>
            <person name="Yao H."/>
            <person name="Wang Y."/>
            <person name="Lovell S."/>
            <person name="Kumar R."/>
            <person name="Ruvinsky A.M."/>
            <person name="Battaile K.P."/>
            <person name="Vakser I.A."/>
            <person name="Rivera M."/>
        </authorList>
    </citation>
    <scope>X-RAY CRYSTALLOGRAPHY (2.00 ANGSTROMS) IN COMPLEX WITH K(+); HEME B AND BFD</scope>
    <scope>SUBUNIT</scope>
</reference>
<reference evidence="23 24 25 26 27 28 29 30 31" key="10">
    <citation type="journal article" date="2015" name="Biochemistry">
        <title>Concerted motions networking pores and distant ferroxidase centers enable bacterioferritin function and iron traffic.</title>
        <authorList>
            <person name="Yao H."/>
            <person name="Rui H."/>
            <person name="Kumar R."/>
            <person name="Eshelman K."/>
            <person name="Lovell S."/>
            <person name="Battaile K.P."/>
            <person name="Im W."/>
            <person name="Rivera M."/>
        </authorList>
    </citation>
    <scope>X-RAY CRYSTALLOGRAPHY (1.65 ANGSTROMS) OF PORE MUTANTS IN COMPLEX WITH K(+); HEME AND IRON</scope>
    <scope>FUNCTION</scope>
    <scope>CATALYTIC ACTIVITY</scope>
    <scope>HEME COFACTOR</scope>
    <scope>SUBUNIT</scope>
    <scope>MUTAGENESIS OF ASP-34; 89-CYS--LYS-96; ASN-148 AND GLN-151</scope>
</reference>
<reference evidence="32 33 34 35 36 37 38" key="11">
    <citation type="journal article" date="2015" name="Biochemistry">
        <title>Characterization of the Bacterioferritin/Bacterioferritin Associated Ferredoxin Protein-Protein Interaction in Solution and Determination of Binding Energy Hot Spots.</title>
        <authorList>
            <person name="Wang Y."/>
            <person name="Yao H."/>
            <person name="Cheng Y."/>
            <person name="Lovell S."/>
            <person name="Battaile K.P."/>
            <person name="Midaugh C.R."/>
            <person name="Rivera M."/>
        </authorList>
    </citation>
    <scope>X-RAY CRYSTALLOGRAPHY (1.50 ANGSTROMS) IN COMPLEX WITH HEME AND IRON</scope>
    <scope>FUNCTION</scope>
    <scope>CATALYTIC ACTIVITY</scope>
    <scope>HEME COFACTOR</scope>
    <scope>SUBUNIT</scope>
    <scope>INTERACTION WITH BFD</scope>
    <scope>MUTAGENESIS OF 68-LEU--GLU-81; LEU-68; GLU-81 AND GLU-85</scope>
</reference>
<reference evidence="39 40" key="12">
    <citation type="journal article" date="2019" name="J. Am. Chem. Soc.">
        <title>Small Molecule Inhibitors of the BfrB-Bfd Interaction Decrease Pseudomonas aeruginosa Fitness and Potentiate Fluoroquinolone Activity.</title>
        <authorList>
            <person name="Punchi Hewage A.N.D."/>
            <person name="Yao H."/>
            <person name="Nammalwar B."/>
            <person name="Gnanasekaran K.K."/>
            <person name="Lovell S."/>
            <person name="Bunce R.A."/>
            <person name="Eshelman K."/>
            <person name="Phaniraj S.M."/>
            <person name="Lee M.M."/>
            <person name="Peterson B.R."/>
            <person name="Battaile K.P."/>
            <person name="Reitz A.B."/>
            <person name="Rivera M."/>
        </authorList>
    </citation>
    <scope>X-RAY CRYSTALLOGRAPHY (1.45 ANGSTROMS) IN COMPLEX WITH FE(2+) AND HEME B</scope>
</reference>
<reference evidence="41 42 43 44" key="13">
    <citation type="journal article" date="2021" name="ACS Infect. Dis.">
        <title>Small Molecule Inhibitors of the Bacterioferritin (BfrB)-Ferredoxin (Bfd) Complex Kill Biofilm-Embedded Pseudomonas aeruginosa Cells.</title>
        <authorList>
            <person name="Soldano A."/>
            <person name="Yao H."/>
            <person name="Punchi Hewage A.N.D."/>
            <person name="Meraz K."/>
            <person name="Annor-Gyamfi J.K."/>
            <person name="Bunce R.A."/>
            <person name="Battaile K.P."/>
            <person name="Lovell S."/>
            <person name="Rivera M."/>
        </authorList>
    </citation>
    <scope>X-RAY CRYSTALLOGRAPHY (1.75 ANGSTROMS) IN COMPLEX WITH K(+); HEME B AND INHIBITORS</scope>
    <scope>SUBUNIT</scope>
    <scope>BIOTECHNOLOGY</scope>
    <source>
        <strain>ATCC 15692 / DSM 22644 / CIP 104116 / JCM 14847 / LMG 12228 / 1C / PRS 101 / PAO1</strain>
        <strain>PA_1076058</strain>
        <strain>PA_1081725</strain>
    </source>
</reference>
<organism>
    <name type="scientific">Pseudomonas aeruginosa (strain ATCC 15692 / DSM 22644 / CIP 104116 / JCM 14847 / LMG 12228 / 1C / PRS 101 / PAO1)</name>
    <dbReference type="NCBI Taxonomy" id="208964"/>
    <lineage>
        <taxon>Bacteria</taxon>
        <taxon>Pseudomonadati</taxon>
        <taxon>Pseudomonadota</taxon>
        <taxon>Gammaproteobacteria</taxon>
        <taxon>Pseudomonadales</taxon>
        <taxon>Pseudomonadaceae</taxon>
        <taxon>Pseudomonas</taxon>
    </lineage>
</organism>
<protein>
    <recommendedName>
        <fullName>Bacterioferritin BfrB</fullName>
        <ecNumber evidence="3 4 8">1.16.3.1</ecNumber>
    </recommendedName>
    <alternativeName>
        <fullName evidence="15">Bacterioferritin beta subunit</fullName>
        <shortName evidence="15">BFR beta subunit</shortName>
    </alternativeName>
    <alternativeName>
        <fullName evidence="14">Nonheme-iron-containing cytochrome b557</fullName>
    </alternativeName>
</protein>
<comment type="function">
    <text evidence="3 4 5 6 7 8">The major iron-storage protein, part of the heterooligomeric bacterioferritin (BFR) complex. The ferroxidase center binds Fe(2+), oxidizes it using dioxygen to Fe(3+), and participates in the subsequent Fe(3+) oxide mineral core formation within the central cavity of the BFR protein shell. Can store up to 600 iron atoms per bacterioferritin protein molecule (PubMed:19575528, PubMed:20067302, PubMed:25640193, PubMed:26368531). In iron-sufficient conditions (10 uM Fe(2+)) iron accumulates in BFR until about 12 hours, when it starts to deplete; stored iron is no longer detectable by 24 hours growth, iron is mobilized from the BFR as levels drop in the growth media (PubMed:28318006). Iron release from the BFR requires ferredoxin NADP reductase (FPR) and bacterioferritin-associated ferredoxin (Bfd) (PubMed:19575528, PubMed:22812654, PubMed:26368531). Reduction of the BfrB heme group occurs in the presence of Bfd, strongly suggesting that the BfrB-Bfd complex allows heme to mediate electron transfer from FPR to the Fe(3+) iron core in the BFR shell prior to its release as Fe(2+) (PubMed:19575528, PubMed:22812654, PubMed:26368531).</text>
</comment>
<comment type="catalytic activity">
    <reaction evidence="3 4 6 7 8">
        <text>4 Fe(2+) + O2 + 4 H(+) = 4 Fe(3+) + 2 H2O</text>
        <dbReference type="Rhea" id="RHEA:11148"/>
        <dbReference type="ChEBI" id="CHEBI:15377"/>
        <dbReference type="ChEBI" id="CHEBI:15378"/>
        <dbReference type="ChEBI" id="CHEBI:15379"/>
        <dbReference type="ChEBI" id="CHEBI:29033"/>
        <dbReference type="ChEBI" id="CHEBI:29034"/>
        <dbReference type="EC" id="1.16.3.1"/>
    </reaction>
    <physiologicalReaction direction="left-to-right" evidence="3 4 6 7 8">
        <dbReference type="Rhea" id="RHEA:11149"/>
    </physiologicalReaction>
    <physiologicalReaction direction="right-to-left" evidence="7 8">
        <dbReference type="Rhea" id="RHEA:11150"/>
    </physiologicalReaction>
</comment>
<comment type="catalytic activity">
    <reaction evidence="3 4 6 7 8">
        <text>Fe(2+)(in) = Fe(2+)(out)</text>
        <dbReference type="Rhea" id="RHEA:28486"/>
        <dbReference type="ChEBI" id="CHEBI:29033"/>
    </reaction>
</comment>
<comment type="cofactor">
    <cofactor evidence="3 4 6 7 10 11">
        <name>heme b</name>
        <dbReference type="ChEBI" id="CHEBI:60344"/>
    </cofactor>
    <text evidence="3 4 6 7 10">Each BfrB homodimer binds 1 heme group coordinated by an axial ligand from each subunit (PubMed:19575528, PubMed:20067302, PubMed:25640193, PubMed:26368531, PubMed:33269912).</text>
</comment>
<comment type="subunit">
    <text evidence="3 4 5 6 7 9 10 11 12">The bacterioferritin (BFR) complex is formed of 24 subunits (FtnA and BfrB) arranged as 12 homodimers (PubMed:19575528, PubMed:20067302, PubMed:25640193, PubMed:26368531, PubMed:33269912, PubMed:35327558). The holocomplex contains about 8.7% Fe and 8.0% phosphate (PubMed:3100721). A pure BfrB BFR is a hollow shell with an external diameter of 118 Angstroms and an internal diameter of 73 Angstroms that binds 12 heme molecules and up to 600 Fe(3+) ions per subunit (PubMed:20067302, PubMed:25640193, PubMed:26368531). The BfrB-only BFR has twenty-four ferroxidase pores which serve as a conduit for Fe(2+) (PubMed:20067302). Asp-50 and His-130 may serve to gate iron from the ferroxidase center into the central iron core; the residues change conformation in the iron-free versus Fe(2+) complex (PubMed:20067302, PubMed:26368531). There are eight 3-fold pores which may serve for anion uptake, six 4-fold pores (occupied by K(+)) and 24 B-pores (probably serve for K(+) update) (PubMed:20067302, PubMed:25640193). Interacts with Bfd; up to 12 Bfd proteins can bind to BFR (PubMed:19575528, PubMed:22812654, PubMed:26368531, PubMed:35327558). One Bfd protein binds to a BfrB dimer in the pure BfrB BFR, with the [2Fe-2S] cluster positioned about 22 Angstroms above the heme of BfrB (PubMed:22812654). In vivo purifies with FtnA (formerly bfrA) in varying ratios, depending on the O(2) content; as O(2) decreases FtnA content rises (PubMed:35327558, PubMed:7998985). Pure BfrB BFR complexes are isolated after growth in 21% O(2) (PubMed:35327558).</text>
</comment>
<comment type="subcellular location">
    <subcellularLocation>
        <location evidence="11 12">Cytoplasm</location>
    </subcellularLocation>
    <text evidence="11">Forms 24 subunit ferritin complexes (PubMed:35327558).</text>
</comment>
<comment type="induction">
    <text evidence="2">24-fold increase in transcription in response to iron treatment (PubMed:14513207).</text>
</comment>
<comment type="mass spectrometry" mass="18552.0" method="Electrospray" evidence="11">
    <text>Isolated from BFR in vivo.</text>
</comment>
<comment type="disruption phenotype">
    <text evidence="8 11">No growth phenotype in iron-sufficient conditions, cells do not store detectable iron under any conditions tested, cells secrete less pyoverdin siderophore and deplete iron from the medium slowly (PubMed:28318006). Very low amounts of FtnA-only BFR complexes accumulate in vivo at low O(2) levels (PubMed:35327558).</text>
</comment>
<comment type="biotechnology">
    <text evidence="10">Small molecules designed to bind BfrB at the Bfd binding site (derivatives of 4-aminoisoindoline-1,3-dione) cause cell death in model biofilms, and are bacteriostatic in planktonic cells, suggesting these compounds are potential antibiotics (PubMed:33269912). Model biofilms were tested in strains PAO1, PA_1081725 and PA_1076058 (PubMed:33269912).</text>
</comment>
<comment type="miscellaneous">
    <text evidence="4 6">The unstable catalytic diiron-binding site within each subunit (Fe1 and Fe2, ferroxidase center) also serves as a pore for iron uptake; the ferroxidase center is labile (PubMed:20067302, PubMed:25640193). In the iron-loaded BRF crystal structure additional stably-bound iron ions are seen inside close to the ferroxidase pore (PubMed:20067302, PubMed:25640193). Mutagenesis of residues reveals other stably bound Fe cations in the interior of the BFR shell; they may represent a pathway followed by Fe(3+) to the central iron storage core (PubMed:25640193).</text>
</comment>
<comment type="similarity">
    <text evidence="16">Belongs to the bacterioferritin family.</text>
</comment>
<accession>Q9HY79</accession>